<gene>
    <name evidence="1" type="primary">psd</name>
    <name type="ordered locus">BceJ2315_23160</name>
    <name type="ORF">BCAL2356</name>
</gene>
<keyword id="KW-1003">Cell membrane</keyword>
<keyword id="KW-0210">Decarboxylase</keyword>
<keyword id="KW-0444">Lipid biosynthesis</keyword>
<keyword id="KW-0443">Lipid metabolism</keyword>
<keyword id="KW-0456">Lyase</keyword>
<keyword id="KW-0472">Membrane</keyword>
<keyword id="KW-0594">Phospholipid biosynthesis</keyword>
<keyword id="KW-1208">Phospholipid metabolism</keyword>
<keyword id="KW-0670">Pyruvate</keyword>
<keyword id="KW-0865">Zymogen</keyword>
<name>PSD_BURCJ</name>
<accession>B4E5N4</accession>
<reference key="1">
    <citation type="journal article" date="2009" name="J. Bacteriol.">
        <title>The genome of Burkholderia cenocepacia J2315, an epidemic pathogen of cystic fibrosis patients.</title>
        <authorList>
            <person name="Holden M.T."/>
            <person name="Seth-Smith H.M."/>
            <person name="Crossman L.C."/>
            <person name="Sebaihia M."/>
            <person name="Bentley S.D."/>
            <person name="Cerdeno-Tarraga A.M."/>
            <person name="Thomson N.R."/>
            <person name="Bason N."/>
            <person name="Quail M.A."/>
            <person name="Sharp S."/>
            <person name="Cherevach I."/>
            <person name="Churcher C."/>
            <person name="Goodhead I."/>
            <person name="Hauser H."/>
            <person name="Holroyd N."/>
            <person name="Mungall K."/>
            <person name="Scott P."/>
            <person name="Walker D."/>
            <person name="White B."/>
            <person name="Rose H."/>
            <person name="Iversen P."/>
            <person name="Mil-Homens D."/>
            <person name="Rocha E.P."/>
            <person name="Fialho A.M."/>
            <person name="Baldwin A."/>
            <person name="Dowson C."/>
            <person name="Barrell B.G."/>
            <person name="Govan J.R."/>
            <person name="Vandamme P."/>
            <person name="Hart C.A."/>
            <person name="Mahenthiralingam E."/>
            <person name="Parkhill J."/>
        </authorList>
    </citation>
    <scope>NUCLEOTIDE SEQUENCE [LARGE SCALE GENOMIC DNA]</scope>
    <source>
        <strain>ATCC BAA-245 / DSM 16553 / LMG 16656 / NCTC 13227 / J2315 / CF5610</strain>
    </source>
</reference>
<dbReference type="EC" id="4.1.1.65" evidence="1"/>
<dbReference type="EMBL" id="AM747720">
    <property type="protein sequence ID" value="CAR52657.1"/>
    <property type="molecule type" value="Genomic_DNA"/>
</dbReference>
<dbReference type="RefSeq" id="WP_006491035.1">
    <property type="nucleotide sequence ID" value="NC_011000.1"/>
</dbReference>
<dbReference type="SMR" id="B4E5N4"/>
<dbReference type="KEGG" id="bcj:BCAL2356"/>
<dbReference type="eggNOG" id="COG0688">
    <property type="taxonomic scope" value="Bacteria"/>
</dbReference>
<dbReference type="HOGENOM" id="CLU_072492_0_0_4"/>
<dbReference type="BioCyc" id="BCEN216591:G1G1V-2602-MONOMER"/>
<dbReference type="UniPathway" id="UPA00558">
    <property type="reaction ID" value="UER00616"/>
</dbReference>
<dbReference type="Proteomes" id="UP000001035">
    <property type="component" value="Chromosome 1"/>
</dbReference>
<dbReference type="GO" id="GO:0005886">
    <property type="term" value="C:plasma membrane"/>
    <property type="evidence" value="ECO:0007669"/>
    <property type="project" value="UniProtKB-SubCell"/>
</dbReference>
<dbReference type="GO" id="GO:0004609">
    <property type="term" value="F:phosphatidylserine decarboxylase activity"/>
    <property type="evidence" value="ECO:0007669"/>
    <property type="project" value="UniProtKB-UniRule"/>
</dbReference>
<dbReference type="GO" id="GO:0006646">
    <property type="term" value="P:phosphatidylethanolamine biosynthetic process"/>
    <property type="evidence" value="ECO:0007669"/>
    <property type="project" value="UniProtKB-UniRule"/>
</dbReference>
<dbReference type="HAMAP" id="MF_00664">
    <property type="entry name" value="PS_decarb_PSD_A"/>
    <property type="match status" value="1"/>
</dbReference>
<dbReference type="InterPro" id="IPR003817">
    <property type="entry name" value="PS_Dcarbxylase"/>
</dbReference>
<dbReference type="InterPro" id="IPR033175">
    <property type="entry name" value="PSD-A"/>
</dbReference>
<dbReference type="NCBIfam" id="TIGR00164">
    <property type="entry name" value="AS_decarb"/>
    <property type="match status" value="1"/>
</dbReference>
<dbReference type="NCBIfam" id="NF003678">
    <property type="entry name" value="PRK05305.1-2"/>
    <property type="match status" value="1"/>
</dbReference>
<dbReference type="NCBIfam" id="NF003680">
    <property type="entry name" value="PRK05305.1-5"/>
    <property type="match status" value="1"/>
</dbReference>
<dbReference type="NCBIfam" id="NF003685">
    <property type="entry name" value="PRK05305.2-5"/>
    <property type="match status" value="1"/>
</dbReference>
<dbReference type="PANTHER" id="PTHR35809">
    <property type="entry name" value="ARCHAETIDYLSERINE DECARBOXYLASE PROENZYME-RELATED"/>
    <property type="match status" value="1"/>
</dbReference>
<dbReference type="PANTHER" id="PTHR35809:SF1">
    <property type="entry name" value="ARCHAETIDYLSERINE DECARBOXYLASE PROENZYME-RELATED"/>
    <property type="match status" value="1"/>
</dbReference>
<dbReference type="Pfam" id="PF02666">
    <property type="entry name" value="PS_Dcarbxylase"/>
    <property type="match status" value="1"/>
</dbReference>
<feature type="chain" id="PRO_1000131448" description="Phosphatidylserine decarboxylase beta chain" evidence="1">
    <location>
        <begin position="1"/>
        <end position="181"/>
    </location>
</feature>
<feature type="chain" id="PRO_1000131449" description="Phosphatidylserine decarboxylase alpha chain" evidence="1">
    <location>
        <begin position="182"/>
        <end position="214"/>
    </location>
</feature>
<feature type="active site" description="Schiff-base intermediate with substrate; via pyruvic acid" evidence="1">
    <location>
        <position position="182"/>
    </location>
</feature>
<feature type="site" description="Cleavage (non-hydrolytic); by autocatalysis" evidence="1">
    <location>
        <begin position="181"/>
        <end position="182"/>
    </location>
</feature>
<feature type="modified residue" description="Pyruvic acid (Ser); by autocatalysis" evidence="1">
    <location>
        <position position="182"/>
    </location>
</feature>
<proteinExistence type="inferred from homology"/>
<evidence type="ECO:0000255" key="1">
    <source>
        <dbReference type="HAMAP-Rule" id="MF_00664"/>
    </source>
</evidence>
<organism>
    <name type="scientific">Burkholderia cenocepacia (strain ATCC BAA-245 / DSM 16553 / LMG 16656 / NCTC 13227 / J2315 / CF5610)</name>
    <name type="common">Burkholderia cepacia (strain J2315)</name>
    <dbReference type="NCBI Taxonomy" id="216591"/>
    <lineage>
        <taxon>Bacteria</taxon>
        <taxon>Pseudomonadati</taxon>
        <taxon>Pseudomonadota</taxon>
        <taxon>Betaproteobacteria</taxon>
        <taxon>Burkholderiales</taxon>
        <taxon>Burkholderiaceae</taxon>
        <taxon>Burkholderia</taxon>
        <taxon>Burkholderia cepacia complex</taxon>
    </lineage>
</organism>
<sequence>MNYPHPIIAREGWPFIAIAAVIALLIHAVGGFGFAWPFWLLLVFVVQFFRDPQRPIPAQPNAVLCPADGRIVAVETAQDPYANREALKISVFMNVFNVHSQRSPVDGAISKVEYFPGAFLNAAIDKASTENERNAVVIQTASGKTVTSVQIAGLIARRILCYVRAGEPLSRGQRYGFIRFGSRVDVYLPLGSRAKVSIGEKVYASSTILAELEQ</sequence>
<comment type="function">
    <text evidence="1">Catalyzes the formation of phosphatidylethanolamine (PtdEtn) from phosphatidylserine (PtdSer).</text>
</comment>
<comment type="catalytic activity">
    <reaction evidence="1">
        <text>a 1,2-diacyl-sn-glycero-3-phospho-L-serine + H(+) = a 1,2-diacyl-sn-glycero-3-phosphoethanolamine + CO2</text>
        <dbReference type="Rhea" id="RHEA:20828"/>
        <dbReference type="ChEBI" id="CHEBI:15378"/>
        <dbReference type="ChEBI" id="CHEBI:16526"/>
        <dbReference type="ChEBI" id="CHEBI:57262"/>
        <dbReference type="ChEBI" id="CHEBI:64612"/>
        <dbReference type="EC" id="4.1.1.65"/>
    </reaction>
</comment>
<comment type="cofactor">
    <cofactor evidence="1">
        <name>pyruvate</name>
        <dbReference type="ChEBI" id="CHEBI:15361"/>
    </cofactor>
    <text evidence="1">Binds 1 pyruvoyl group covalently per subunit.</text>
</comment>
<comment type="pathway">
    <text evidence="1">Phospholipid metabolism; phosphatidylethanolamine biosynthesis; phosphatidylethanolamine from CDP-diacylglycerol: step 2/2.</text>
</comment>
<comment type="subunit">
    <text evidence="1">Heterodimer of a large membrane-associated beta subunit and a small pyruvoyl-containing alpha subunit.</text>
</comment>
<comment type="subcellular location">
    <subcellularLocation>
        <location evidence="1">Cell membrane</location>
        <topology evidence="1">Peripheral membrane protein</topology>
    </subcellularLocation>
</comment>
<comment type="PTM">
    <text evidence="1">Is synthesized initially as an inactive proenzyme. Formation of the active enzyme involves a self-maturation process in which the active site pyruvoyl group is generated from an internal serine residue via an autocatalytic post-translational modification. Two non-identical subunits are generated from the proenzyme in this reaction, and the pyruvate is formed at the N-terminus of the alpha chain, which is derived from the carboxyl end of the proenzyme. The post-translation cleavage follows an unusual pathway, termed non-hydrolytic serinolysis, in which the side chain hydroxyl group of the serine supplies its oxygen atom to form the C-terminus of the beta chain, while the remainder of the serine residue undergoes an oxidative deamination to produce ammonia and the pyruvoyl prosthetic group on the alpha chain.</text>
</comment>
<comment type="similarity">
    <text evidence="1">Belongs to the phosphatidylserine decarboxylase family. PSD-A subfamily.</text>
</comment>
<protein>
    <recommendedName>
        <fullName evidence="1">Phosphatidylserine decarboxylase proenzyme</fullName>
        <ecNumber evidence="1">4.1.1.65</ecNumber>
    </recommendedName>
    <component>
        <recommendedName>
            <fullName evidence="1">Phosphatidylserine decarboxylase alpha chain</fullName>
        </recommendedName>
    </component>
    <component>
        <recommendedName>
            <fullName evidence="1">Phosphatidylserine decarboxylase beta chain</fullName>
        </recommendedName>
    </component>
</protein>